<comment type="function">
    <text evidence="2 3">Cytokine that binds to TNFRSF1A/TNFR1 and TNFRSF1B/TNFBR. It is mainly secreted by macrophages and can induce cell death of certain tumor cell lines. It is potent pyrogen causing fever by direct action or by stimulation of interleukin-1 secretion and is implicated in the induction of cachexia, Under certain conditions it can stimulate cell proliferation and induce cell differentiation (By similarity). Induces insulin resistance in adipocytes via inhibition of insulin-induced IRS1 tyrosine phosphorylation and insulin-induced glucose uptake. Induces GKAP42 protein degradation in adipocytes which is partially responsible for TNF-induced insulin resistance (By similarity). Plays a role in angiogenesis by inducing VEGF production synergistically with IL1B and IL6 (By similarity). Promotes osteoclastogenesis and therefore mediates bone resorption (By similarity).</text>
</comment>
<comment type="function">
    <text evidence="2">The TNF intracellular domain (ICD) form induces IL12 production in dendritic cells.</text>
</comment>
<comment type="subunit">
    <text evidence="1">Homotrimer. Interacts with SPPL2B (By similarity).</text>
</comment>
<comment type="subcellular location">
    <subcellularLocation>
        <location evidence="1">Cell membrane</location>
        <topology evidence="1">Single-pass type II membrane protein</topology>
    </subcellularLocation>
</comment>
<comment type="subcellular location">
    <molecule>Tumor necrosis factor, membrane form</molecule>
    <subcellularLocation>
        <location evidence="1">Membrane</location>
        <topology evidence="1">Single-pass type II membrane protein</topology>
    </subcellularLocation>
</comment>
<comment type="subcellular location">
    <molecule>Tumor necrosis factor, soluble form</molecule>
    <subcellularLocation>
        <location evidence="1">Secreted</location>
    </subcellularLocation>
</comment>
<comment type="subcellular location">
    <molecule>C-domain 1</molecule>
    <subcellularLocation>
        <location evidence="1">Secreted</location>
    </subcellularLocation>
</comment>
<comment type="subcellular location">
    <molecule>C-domain 2</molecule>
    <subcellularLocation>
        <location evidence="1">Secreted</location>
    </subcellularLocation>
</comment>
<comment type="PTM">
    <text evidence="1">The soluble form derives from the membrane form by proteolytic processing. The membrane-bound form is further proteolytically processed by SPPL2A or SPPL2B through regulated intramembrane proteolysis producing TNF intracellular domains (ICD1 and ICD2) released in the cytosol and TNF C-domain 1 and C-domain 2 secreted into the extracellular space (By similarity).</text>
</comment>
<comment type="PTM">
    <text evidence="1">The membrane form, but not the soluble form, is phosphorylated on serine residues. Dephosphorylation of the membrane form occurs by binding to soluble TNFRSF1A/TNFR1 (By similarity).</text>
</comment>
<comment type="PTM">
    <text evidence="1">O-glycosylated; glycans contain galactose, N-acetylgalactosamine and N-acetylneuraminic acid.</text>
</comment>
<comment type="PTM">
    <molecule>Tumor necrosis factor, soluble form</molecule>
    <text evidence="2">The soluble form is demyristoylated by SIRT6, promoting its secretion.</text>
</comment>
<comment type="similarity">
    <text evidence="6">Belongs to the tumor necrosis factor family.</text>
</comment>
<sequence>MSTENMIRDVELAEEELQRKARGPQGPGRCLCLILTFFLLLAGATLLFCLLHFGVIGPQNEEASTDAFLGMKPVTQRVRSCQTESNKPVAHVIADPLAEGKLQWLKRRANVLLSNGMDLVDNQLVVPSTGLYLVYSQLLFKGEDCANEPLLLTHTVSRVALSYQSKVNLLSAIKSPCQKTVKGAREASPWYEPIYLGGVFQLEKGDKLSADTNYPNYLDFAESGQVYFGVIAL</sequence>
<name>TNFA_NOTEU</name>
<protein>
    <recommendedName>
        <fullName>Tumor necrosis factor</fullName>
    </recommendedName>
    <alternativeName>
        <fullName>Cachectin</fullName>
    </alternativeName>
    <alternativeName>
        <fullName>TNF-alpha</fullName>
    </alternativeName>
    <alternativeName>
        <fullName>Tumor necrosis factor ligand superfamily member 2</fullName>
        <shortName>TNF-a</shortName>
    </alternativeName>
    <component>
        <recommendedName>
            <fullName>Tumor necrosis factor, membrane form</fullName>
        </recommendedName>
        <alternativeName>
            <fullName>N-terminal fragment</fullName>
            <shortName>NTF</shortName>
        </alternativeName>
    </component>
    <component>
        <recommendedName>
            <fullName>Intracellular domain 1</fullName>
            <shortName>ICD1</shortName>
        </recommendedName>
    </component>
    <component>
        <recommendedName>
            <fullName>Intracellular domain 2</fullName>
            <shortName>ICD2</shortName>
        </recommendedName>
    </component>
    <component>
        <recommendedName>
            <fullName>C-domain 1</fullName>
        </recommendedName>
    </component>
    <component>
        <recommendedName>
            <fullName>C-domain 2</fullName>
        </recommendedName>
    </component>
    <component>
        <recommendedName>
            <fullName>Tumor necrosis factor, soluble form</fullName>
        </recommendedName>
    </component>
</protein>
<organism>
    <name type="scientific">Notamacropus eugenii</name>
    <name type="common">Tammar wallaby</name>
    <name type="synonym">Macropus eugenii</name>
    <dbReference type="NCBI Taxonomy" id="9315"/>
    <lineage>
        <taxon>Eukaryota</taxon>
        <taxon>Metazoa</taxon>
        <taxon>Chordata</taxon>
        <taxon>Craniata</taxon>
        <taxon>Vertebrata</taxon>
        <taxon>Euteleostomi</taxon>
        <taxon>Mammalia</taxon>
        <taxon>Metatheria</taxon>
        <taxon>Diprotodontia</taxon>
        <taxon>Macropodidae</taxon>
        <taxon>Notamacropus</taxon>
    </lineage>
</organism>
<evidence type="ECO:0000250" key="1"/>
<evidence type="ECO:0000250" key="2">
    <source>
        <dbReference type="UniProtKB" id="P01375"/>
    </source>
</evidence>
<evidence type="ECO:0000250" key="3">
    <source>
        <dbReference type="UniProtKB" id="P06804"/>
    </source>
</evidence>
<evidence type="ECO:0000255" key="4"/>
<evidence type="ECO:0000255" key="5">
    <source>
        <dbReference type="PROSITE-ProRule" id="PRU01387"/>
    </source>
</evidence>
<evidence type="ECO:0000305" key="6"/>
<keyword id="KW-1003">Cell membrane</keyword>
<keyword id="KW-0202">Cytokine</keyword>
<keyword id="KW-1015">Disulfide bond</keyword>
<keyword id="KW-0449">Lipoprotein</keyword>
<keyword id="KW-0472">Membrane</keyword>
<keyword id="KW-0519">Myristate</keyword>
<keyword id="KW-0597">Phosphoprotein</keyword>
<keyword id="KW-0964">Secreted</keyword>
<keyword id="KW-0735">Signal-anchor</keyword>
<keyword id="KW-0812">Transmembrane</keyword>
<keyword id="KW-1133">Transmembrane helix</keyword>
<accession>O77764</accession>
<feature type="chain" id="PRO_0000034427" description="Tumor necrosis factor, membrane form">
    <location>
        <begin position="1"/>
        <end position="233"/>
    </location>
</feature>
<feature type="chain" id="PRO_0000417239" description="Intracellular domain 1" evidence="1">
    <location>
        <begin position="1"/>
        <end position="39"/>
    </location>
</feature>
<feature type="chain" id="PRO_0000417240" description="Intracellular domain 2" evidence="1">
    <location>
        <begin position="1"/>
        <end position="35"/>
    </location>
</feature>
<feature type="chain" id="PRO_0000417241" description="C-domain 1" evidence="1">
    <location>
        <begin position="50"/>
        <end status="unknown"/>
    </location>
</feature>
<feature type="chain" id="PRO_0000417242" description="C-domain 2" evidence="1">
    <location>
        <begin position="52"/>
        <end status="unknown"/>
    </location>
</feature>
<feature type="chain" id="PRO_0000034428" description="Tumor necrosis factor, soluble form">
    <location>
        <begin position="78"/>
        <end position="233"/>
    </location>
</feature>
<feature type="topological domain" description="Cytoplasmic" evidence="4">
    <location>
        <begin position="1"/>
        <end position="35"/>
    </location>
</feature>
<feature type="transmembrane region" description="Helical; Signal-anchor for type II membrane protein" evidence="4">
    <location>
        <begin position="36"/>
        <end position="56"/>
    </location>
</feature>
<feature type="topological domain" description="Extracellular" evidence="4">
    <location>
        <begin position="57"/>
        <end position="233"/>
    </location>
</feature>
<feature type="domain" description="THD" evidence="5">
    <location>
        <begin position="88"/>
        <end position="233"/>
    </location>
</feature>
<feature type="site" description="Cleavage; by SPPL2A or SPPL2B" evidence="1">
    <location>
        <begin position="39"/>
        <end position="40"/>
    </location>
</feature>
<feature type="site" description="Cleavage; by SPPL2A or SPPL2B" evidence="1">
    <location>
        <begin position="49"/>
        <end position="50"/>
    </location>
</feature>
<feature type="site" description="Cleavage; by SPPL2A or SPPL2B" evidence="1">
    <location>
        <begin position="51"/>
        <end position="52"/>
    </location>
</feature>
<feature type="site" description="Cleavage; by ADAM17" evidence="4">
    <location>
        <begin position="77"/>
        <end position="78"/>
    </location>
</feature>
<feature type="modified residue" description="Phosphoserine; by CK1" evidence="1">
    <location>
        <position position="2"/>
    </location>
</feature>
<feature type="lipid moiety-binding region" description="N6-myristoyl lysine" evidence="2">
    <location>
        <position position="20"/>
    </location>
</feature>
<feature type="disulfide bond" evidence="5">
    <location>
        <begin position="145"/>
        <end position="177"/>
    </location>
</feature>
<gene>
    <name type="primary">TNF</name>
    <name type="synonym">TNFA</name>
    <name type="synonym">TNFSF2</name>
</gene>
<reference key="1">
    <citation type="journal article" date="1999" name="Immunogenetics">
        <title>Conservation of 3' untranslated region elements in tammar wallaby (Macropus eugenii) TNF-alpha mRNA.</title>
        <authorList>
            <person name="Harrison G.A."/>
            <person name="Broughton M.J."/>
            <person name="Young L.J."/>
            <person name="Cooper D.W."/>
            <person name="Deane E.M."/>
        </authorList>
    </citation>
    <scope>NUCLEOTIDE SEQUENCE [MRNA]</scope>
</reference>
<dbReference type="EMBL" id="AF055915">
    <property type="protein sequence ID" value="AAC61491.1"/>
    <property type="molecule type" value="mRNA"/>
</dbReference>
<dbReference type="SMR" id="O77764"/>
<dbReference type="HOGENOM" id="CLU_070352_3_1_1"/>
<dbReference type="GO" id="GO:0009986">
    <property type="term" value="C:cell surface"/>
    <property type="evidence" value="ECO:0007669"/>
    <property type="project" value="TreeGrafter"/>
</dbReference>
<dbReference type="GO" id="GO:0005615">
    <property type="term" value="C:extracellular space"/>
    <property type="evidence" value="ECO:0007669"/>
    <property type="project" value="UniProtKB-KW"/>
</dbReference>
<dbReference type="GO" id="GO:0005886">
    <property type="term" value="C:plasma membrane"/>
    <property type="evidence" value="ECO:0007669"/>
    <property type="project" value="UniProtKB-SubCell"/>
</dbReference>
<dbReference type="GO" id="GO:0005125">
    <property type="term" value="F:cytokine activity"/>
    <property type="evidence" value="ECO:0007669"/>
    <property type="project" value="UniProtKB-KW"/>
</dbReference>
<dbReference type="GO" id="GO:0005164">
    <property type="term" value="F:tumor necrosis factor receptor binding"/>
    <property type="evidence" value="ECO:0007669"/>
    <property type="project" value="InterPro"/>
</dbReference>
<dbReference type="GO" id="GO:0008625">
    <property type="term" value="P:extrinsic apoptotic signaling pathway via death domain receptors"/>
    <property type="evidence" value="ECO:0007669"/>
    <property type="project" value="TreeGrafter"/>
</dbReference>
<dbReference type="GO" id="GO:0006955">
    <property type="term" value="P:immune response"/>
    <property type="evidence" value="ECO:0007669"/>
    <property type="project" value="InterPro"/>
</dbReference>
<dbReference type="GO" id="GO:0097527">
    <property type="term" value="P:necroptotic signaling pathway"/>
    <property type="evidence" value="ECO:0000250"/>
    <property type="project" value="UniProtKB"/>
</dbReference>
<dbReference type="GO" id="GO:0043242">
    <property type="term" value="P:negative regulation of protein-containing complex disassembly"/>
    <property type="evidence" value="ECO:0000250"/>
    <property type="project" value="UniProtKB"/>
</dbReference>
<dbReference type="GO" id="GO:0043065">
    <property type="term" value="P:positive regulation of apoptotic process"/>
    <property type="evidence" value="ECO:0000250"/>
    <property type="project" value="UniProtKB"/>
</dbReference>
<dbReference type="GO" id="GO:0043123">
    <property type="term" value="P:positive regulation of canonical NF-kappaB signal transduction"/>
    <property type="evidence" value="ECO:0007669"/>
    <property type="project" value="TreeGrafter"/>
</dbReference>
<dbReference type="GO" id="GO:2001238">
    <property type="term" value="P:positive regulation of extrinsic apoptotic signaling pathway"/>
    <property type="evidence" value="ECO:0007669"/>
    <property type="project" value="TreeGrafter"/>
</dbReference>
<dbReference type="GO" id="GO:0043507">
    <property type="term" value="P:positive regulation of JUN kinase activity"/>
    <property type="evidence" value="ECO:0000250"/>
    <property type="project" value="UniProtKB"/>
</dbReference>
<dbReference type="GO" id="GO:0043406">
    <property type="term" value="P:positive regulation of MAP kinase activity"/>
    <property type="evidence" value="ECO:0000250"/>
    <property type="project" value="UniProtKB"/>
</dbReference>
<dbReference type="GO" id="GO:0051092">
    <property type="term" value="P:positive regulation of NF-kappaB transcription factor activity"/>
    <property type="evidence" value="ECO:0000250"/>
    <property type="project" value="UniProtKB"/>
</dbReference>
<dbReference type="GO" id="GO:0001934">
    <property type="term" value="P:positive regulation of protein phosphorylation"/>
    <property type="evidence" value="ECO:0000250"/>
    <property type="project" value="UniProtKB"/>
</dbReference>
<dbReference type="GO" id="GO:0043243">
    <property type="term" value="P:positive regulation of protein-containing complex disassembly"/>
    <property type="evidence" value="ECO:0000250"/>
    <property type="project" value="UniProtKB"/>
</dbReference>
<dbReference type="GO" id="GO:0045944">
    <property type="term" value="P:positive regulation of transcription by RNA polymerase II"/>
    <property type="evidence" value="ECO:0007669"/>
    <property type="project" value="TreeGrafter"/>
</dbReference>
<dbReference type="GO" id="GO:0065008">
    <property type="term" value="P:regulation of biological quality"/>
    <property type="evidence" value="ECO:0007669"/>
    <property type="project" value="UniProtKB-ARBA"/>
</dbReference>
<dbReference type="GO" id="GO:0050793">
    <property type="term" value="P:regulation of developmental process"/>
    <property type="evidence" value="ECO:0007669"/>
    <property type="project" value="UniProtKB-ARBA"/>
</dbReference>
<dbReference type="GO" id="GO:0051239">
    <property type="term" value="P:regulation of multicellular organismal process"/>
    <property type="evidence" value="ECO:0007669"/>
    <property type="project" value="UniProtKB-ARBA"/>
</dbReference>
<dbReference type="GO" id="GO:0051046">
    <property type="term" value="P:regulation of secretion"/>
    <property type="evidence" value="ECO:0007669"/>
    <property type="project" value="UniProtKB-ARBA"/>
</dbReference>
<dbReference type="GO" id="GO:0033209">
    <property type="term" value="P:tumor necrosis factor-mediated signaling pathway"/>
    <property type="evidence" value="ECO:0007669"/>
    <property type="project" value="TreeGrafter"/>
</dbReference>
<dbReference type="GO" id="GO:0010573">
    <property type="term" value="P:vascular endothelial growth factor production"/>
    <property type="evidence" value="ECO:0000250"/>
    <property type="project" value="UniProtKB"/>
</dbReference>
<dbReference type="CDD" id="cd00184">
    <property type="entry name" value="TNF"/>
    <property type="match status" value="1"/>
</dbReference>
<dbReference type="FunFam" id="2.60.120.40:FF:000007">
    <property type="entry name" value="Tumor necrosis factor"/>
    <property type="match status" value="1"/>
</dbReference>
<dbReference type="Gene3D" id="2.60.120.40">
    <property type="match status" value="1"/>
</dbReference>
<dbReference type="InterPro" id="IPR006053">
    <property type="entry name" value="TNF"/>
</dbReference>
<dbReference type="InterPro" id="IPR002959">
    <property type="entry name" value="TNF_alpha"/>
</dbReference>
<dbReference type="InterPro" id="IPR021184">
    <property type="entry name" value="TNF_CS"/>
</dbReference>
<dbReference type="InterPro" id="IPR006052">
    <property type="entry name" value="TNF_dom"/>
</dbReference>
<dbReference type="InterPro" id="IPR008983">
    <property type="entry name" value="Tumour_necrosis_fac-like_dom"/>
</dbReference>
<dbReference type="PANTHER" id="PTHR11471:SF23">
    <property type="entry name" value="TUMOR NECROSIS FACTOR"/>
    <property type="match status" value="1"/>
</dbReference>
<dbReference type="PANTHER" id="PTHR11471">
    <property type="entry name" value="TUMOR NECROSIS FACTOR FAMILY MEMBER"/>
    <property type="match status" value="1"/>
</dbReference>
<dbReference type="Pfam" id="PF00229">
    <property type="entry name" value="TNF"/>
    <property type="match status" value="1"/>
</dbReference>
<dbReference type="PRINTS" id="PR01234">
    <property type="entry name" value="TNECROSISFCT"/>
</dbReference>
<dbReference type="PRINTS" id="PR01235">
    <property type="entry name" value="TNFALPHA"/>
</dbReference>
<dbReference type="SMART" id="SM00207">
    <property type="entry name" value="TNF"/>
    <property type="match status" value="1"/>
</dbReference>
<dbReference type="SUPFAM" id="SSF49842">
    <property type="entry name" value="TNF-like"/>
    <property type="match status" value="1"/>
</dbReference>
<dbReference type="PROSITE" id="PS00251">
    <property type="entry name" value="THD_1"/>
    <property type="match status" value="1"/>
</dbReference>
<dbReference type="PROSITE" id="PS50049">
    <property type="entry name" value="THD_2"/>
    <property type="match status" value="1"/>
</dbReference>
<proteinExistence type="evidence at transcript level"/>